<organism>
    <name type="scientific">Pectobacterium atrosepticum (strain SCRI 1043 / ATCC BAA-672)</name>
    <name type="common">Erwinia carotovora subsp. atroseptica</name>
    <dbReference type="NCBI Taxonomy" id="218491"/>
    <lineage>
        <taxon>Bacteria</taxon>
        <taxon>Pseudomonadati</taxon>
        <taxon>Pseudomonadota</taxon>
        <taxon>Gammaproteobacteria</taxon>
        <taxon>Enterobacterales</taxon>
        <taxon>Pectobacteriaceae</taxon>
        <taxon>Pectobacterium</taxon>
    </lineage>
</organism>
<proteinExistence type="inferred from homology"/>
<gene>
    <name evidence="1" type="primary">kdgT</name>
    <name type="ordered locus">ECA4124</name>
</gene>
<protein>
    <recommendedName>
        <fullName evidence="1">2-keto-3-deoxygluconate permease</fullName>
        <shortName evidence="1">KDG permease</shortName>
    </recommendedName>
</protein>
<feature type="chain" id="PRO_1000031955" description="2-keto-3-deoxygluconate permease">
    <location>
        <begin position="1"/>
        <end position="318"/>
    </location>
</feature>
<feature type="transmembrane region" description="Helical" evidence="1">
    <location>
        <begin position="10"/>
        <end position="30"/>
    </location>
</feature>
<feature type="transmembrane region" description="Helical" evidence="1">
    <location>
        <begin position="42"/>
        <end position="62"/>
    </location>
</feature>
<feature type="transmembrane region" description="Helical" evidence="1">
    <location>
        <begin position="76"/>
        <end position="96"/>
    </location>
</feature>
<feature type="transmembrane region" description="Helical" evidence="1">
    <location>
        <begin position="105"/>
        <end position="125"/>
    </location>
</feature>
<feature type="transmembrane region" description="Helical" evidence="1">
    <location>
        <begin position="139"/>
        <end position="159"/>
    </location>
</feature>
<feature type="transmembrane region" description="Helical" evidence="1">
    <location>
        <begin position="162"/>
        <end position="182"/>
    </location>
</feature>
<feature type="transmembrane region" description="Helical" evidence="1">
    <location>
        <begin position="199"/>
        <end position="219"/>
    </location>
</feature>
<feature type="transmembrane region" description="Helical" evidence="1">
    <location>
        <begin position="224"/>
        <end position="244"/>
    </location>
</feature>
<feature type="transmembrane region" description="Helical" evidence="1">
    <location>
        <begin position="254"/>
        <end position="274"/>
    </location>
</feature>
<feature type="transmembrane region" description="Helical" evidence="1">
    <location>
        <begin position="289"/>
        <end position="309"/>
    </location>
</feature>
<reference key="1">
    <citation type="journal article" date="2004" name="Proc. Natl. Acad. Sci. U.S.A.">
        <title>Genome sequence of the enterobacterial phytopathogen Erwinia carotovora subsp. atroseptica and characterization of virulence factors.</title>
        <authorList>
            <person name="Bell K.S."/>
            <person name="Sebaihia M."/>
            <person name="Pritchard L."/>
            <person name="Holden M.T.G."/>
            <person name="Hyman L.J."/>
            <person name="Holeva M.C."/>
            <person name="Thomson N.R."/>
            <person name="Bentley S.D."/>
            <person name="Churcher L.J.C."/>
            <person name="Mungall K."/>
            <person name="Atkin R."/>
            <person name="Bason N."/>
            <person name="Brooks K."/>
            <person name="Chillingworth T."/>
            <person name="Clark K."/>
            <person name="Doggett J."/>
            <person name="Fraser A."/>
            <person name="Hance Z."/>
            <person name="Hauser H."/>
            <person name="Jagels K."/>
            <person name="Moule S."/>
            <person name="Norbertczak H."/>
            <person name="Ormond D."/>
            <person name="Price C."/>
            <person name="Quail M.A."/>
            <person name="Sanders M."/>
            <person name="Walker D."/>
            <person name="Whitehead S."/>
            <person name="Salmond G.P.C."/>
            <person name="Birch P.R.J."/>
            <person name="Parkhill J."/>
            <person name="Toth I.K."/>
        </authorList>
    </citation>
    <scope>NUCLEOTIDE SEQUENCE [LARGE SCALE GENOMIC DNA]</scope>
    <source>
        <strain>SCRI 1043 / ATCC BAA-672</strain>
    </source>
</reference>
<sequence length="318" mass="32538">MKIKQAIDKIPGGLMLVPLFLGAFCNTFTPGAGKFLGSFSNGLITGTIPILAVWFFCMGASIELKATGSMLKKSGVLVVTKLATAWVVAMIAGAFLPGDGIQNGLLAGISVLALVAAMDMTNGGLYAALMNQYGSKEEAGAFVLMSLESGPLMTMVILGASGIATFEPQLFVGAVLPFLIGFTLGNLDPDLRKLFGNSVQTLIPFFAFALGNTINLSVILQTGFAGIFLGVLVIIVTGIPLILADKFIGGGNGTAGIAASSSAGAAVATPLLIANMAPEFAPVAQQATALVATSVIVTSVLVPIITALWAKRFSPKHA</sequence>
<accession>Q6CZM7</accession>
<name>KDGT_PECAS</name>
<evidence type="ECO:0000255" key="1">
    <source>
        <dbReference type="HAMAP-Rule" id="MF_00070"/>
    </source>
</evidence>
<dbReference type="EMBL" id="BX950851">
    <property type="protein sequence ID" value="CAG77021.1"/>
    <property type="molecule type" value="Genomic_DNA"/>
</dbReference>
<dbReference type="RefSeq" id="WP_011095596.1">
    <property type="nucleotide sequence ID" value="NC_004547.2"/>
</dbReference>
<dbReference type="STRING" id="218491.ECA4124"/>
<dbReference type="GeneID" id="57210787"/>
<dbReference type="KEGG" id="eca:ECA4124"/>
<dbReference type="PATRIC" id="fig|218491.5.peg.4194"/>
<dbReference type="eggNOG" id="ENOG502Z7JT">
    <property type="taxonomic scope" value="Bacteria"/>
</dbReference>
<dbReference type="HOGENOM" id="CLU_057476_0_1_6"/>
<dbReference type="OrthoDB" id="3185611at2"/>
<dbReference type="Proteomes" id="UP000007966">
    <property type="component" value="Chromosome"/>
</dbReference>
<dbReference type="GO" id="GO:0005886">
    <property type="term" value="C:plasma membrane"/>
    <property type="evidence" value="ECO:0007669"/>
    <property type="project" value="UniProtKB-SubCell"/>
</dbReference>
<dbReference type="GO" id="GO:0015649">
    <property type="term" value="F:2-keto-3-deoxygluconate:proton symporter activity"/>
    <property type="evidence" value="ECO:0007669"/>
    <property type="project" value="UniProtKB-UniRule"/>
</dbReference>
<dbReference type="HAMAP" id="MF_00070">
    <property type="entry name" value="KdgT"/>
    <property type="match status" value="1"/>
</dbReference>
<dbReference type="InterPro" id="IPR004684">
    <property type="entry name" value="2keto-3dGluconate_permease"/>
</dbReference>
<dbReference type="InterPro" id="IPR018395">
    <property type="entry name" value="2keto-3dGluconate_permease_sub"/>
</dbReference>
<dbReference type="NCBIfam" id="TIGR00793">
    <property type="entry name" value="kdgT"/>
    <property type="match status" value="1"/>
</dbReference>
<dbReference type="Pfam" id="PF03812">
    <property type="entry name" value="KdgT"/>
    <property type="match status" value="1"/>
</dbReference>
<comment type="function">
    <text evidence="1">Catalyzes the proton-dependent uptake of 2-keto-3-deoxygluconate (KDG) into the cell.</text>
</comment>
<comment type="catalytic activity">
    <reaction evidence="1">
        <text>2-dehydro-3-deoxy-D-gluconate(in) + H(+)(in) = 2-dehydro-3-deoxy-D-gluconate(out) + H(+)(out)</text>
        <dbReference type="Rhea" id="RHEA:29943"/>
        <dbReference type="ChEBI" id="CHEBI:15378"/>
        <dbReference type="ChEBI" id="CHEBI:57990"/>
    </reaction>
    <physiologicalReaction direction="right-to-left" evidence="1">
        <dbReference type="Rhea" id="RHEA:29945"/>
    </physiologicalReaction>
</comment>
<comment type="subcellular location">
    <subcellularLocation>
        <location evidence="1">Cell inner membrane</location>
        <topology evidence="1">Multi-pass membrane protein</topology>
    </subcellularLocation>
</comment>
<comment type="similarity">
    <text evidence="1">Belongs to the KdgT transporter family.</text>
</comment>
<keyword id="KW-0997">Cell inner membrane</keyword>
<keyword id="KW-1003">Cell membrane</keyword>
<keyword id="KW-0472">Membrane</keyword>
<keyword id="KW-1185">Reference proteome</keyword>
<keyword id="KW-0762">Sugar transport</keyword>
<keyword id="KW-0769">Symport</keyword>
<keyword id="KW-0812">Transmembrane</keyword>
<keyword id="KW-1133">Transmembrane helix</keyword>
<keyword id="KW-0813">Transport</keyword>